<comment type="function">
    <text evidence="2">Mediates the side-chain deamidation of N-terminal glutamine residues to glutamate, an important step in N-end rule pathway of protein degradation. Conversion of the resulting N-terminal glutamine to glutamate renders the protein susceptible to arginylation, polyubiquitination and degradation as specified by the N-end rule. Does not act on substrates with internal or C-terminal glutamine and does not act on non-glutamine residues in any position.</text>
</comment>
<comment type="catalytic activity">
    <reaction evidence="2">
        <text>N-terminal L-glutaminyl-[protein] + H2O = N-terminal L-glutamyl-[protein] + NH4(+)</text>
        <dbReference type="Rhea" id="RHEA:50680"/>
        <dbReference type="Rhea" id="RHEA-COMP:12668"/>
        <dbReference type="Rhea" id="RHEA-COMP:12777"/>
        <dbReference type="ChEBI" id="CHEBI:15377"/>
        <dbReference type="ChEBI" id="CHEBI:28938"/>
        <dbReference type="ChEBI" id="CHEBI:64721"/>
        <dbReference type="ChEBI" id="CHEBI:64722"/>
        <dbReference type="EC" id="3.5.1.122"/>
    </reaction>
</comment>
<comment type="subunit">
    <text evidence="3">Monomer.</text>
</comment>
<comment type="similarity">
    <text evidence="4">Belongs to the NTAQ1 family.</text>
</comment>
<keyword id="KW-0378">Hydrolase</keyword>
<keyword id="KW-1185">Reference proteome</keyword>
<proteinExistence type="inferred from homology"/>
<organism>
    <name type="scientific">Drosophila grimshawi</name>
    <name type="common">Hawaiian fruit fly</name>
    <name type="synonym">Idiomyia grimshawi</name>
    <dbReference type="NCBI Taxonomy" id="7222"/>
    <lineage>
        <taxon>Eukaryota</taxon>
        <taxon>Metazoa</taxon>
        <taxon>Ecdysozoa</taxon>
        <taxon>Arthropoda</taxon>
        <taxon>Hexapoda</taxon>
        <taxon>Insecta</taxon>
        <taxon>Pterygota</taxon>
        <taxon>Neoptera</taxon>
        <taxon>Endopterygota</taxon>
        <taxon>Diptera</taxon>
        <taxon>Brachycera</taxon>
        <taxon>Muscomorpha</taxon>
        <taxon>Ephydroidea</taxon>
        <taxon>Drosophilidae</taxon>
        <taxon>Drosophila</taxon>
        <taxon>Hawaiian Drosophila</taxon>
    </lineage>
</organism>
<sequence>MSTDFLFPKIADCSYVSCYCEENVWKLCEQVKRTRPEELGKCYAVFVSNEGRTVPLWRQKAGRGDDQVVIWDYHVFFMHNPLPNRCLVFDLDTTLPFPTYFHKYVTETFRSDLALRPEHHRFFRVIPADTYLIEFSSDRRHMRRPDGSWIKPPPSYPPILSNTNTHCLGDFICMSAGKGPGSVYSLSEFVQNFYKSAHVMAQQNN</sequence>
<feature type="chain" id="PRO_0000381825" description="Protein N-terminal glutamine amidohydrolase">
    <location>
        <begin position="1"/>
        <end position="205"/>
    </location>
</feature>
<feature type="active site" evidence="1">
    <location>
        <position position="20"/>
    </location>
</feature>
<feature type="active site" evidence="1">
    <location>
        <position position="74"/>
    </location>
</feature>
<feature type="active site" evidence="1">
    <location>
        <position position="90"/>
    </location>
</feature>
<reference key="1">
    <citation type="journal article" date="2007" name="Nature">
        <title>Evolution of genes and genomes on the Drosophila phylogeny.</title>
        <authorList>
            <consortium name="Drosophila 12 genomes consortium"/>
        </authorList>
    </citation>
    <scope>NUCLEOTIDE SEQUENCE [LARGE SCALE GENOMIC DNA]</scope>
    <source>
        <strain>Tucson 15287-2541.00</strain>
    </source>
</reference>
<gene>
    <name type="primary">tun</name>
    <name type="ORF">GH21323</name>
</gene>
<protein>
    <recommendedName>
        <fullName>Protein N-terminal glutamine amidohydrolase</fullName>
        <ecNumber evidence="2">3.5.1.122</ecNumber>
    </recommendedName>
    <alternativeName>
        <fullName>Protein NH2-terminal glutamine deamidase</fullName>
        <shortName>N-terminal Gln amidase</shortName>
        <shortName>Nt(Q)-amidase</shortName>
    </alternativeName>
    <alternativeName>
        <fullName>Protein tungus</fullName>
    </alternativeName>
</protein>
<name>NTAQ1_DROGR</name>
<evidence type="ECO:0000250" key="1"/>
<evidence type="ECO:0000250" key="2">
    <source>
        <dbReference type="UniProtKB" id="Q80WB5"/>
    </source>
</evidence>
<evidence type="ECO:0000250" key="3">
    <source>
        <dbReference type="UniProtKB" id="Q96HA8"/>
    </source>
</evidence>
<evidence type="ECO:0000305" key="4"/>
<dbReference type="EC" id="3.5.1.122" evidence="2"/>
<dbReference type="EMBL" id="CH916367">
    <property type="protein sequence ID" value="EDW01237.1"/>
    <property type="molecule type" value="Genomic_DNA"/>
</dbReference>
<dbReference type="SMR" id="B4J8A0"/>
<dbReference type="FunCoup" id="B4J8A0">
    <property type="interactions" value="1479"/>
</dbReference>
<dbReference type="STRING" id="7222.B4J8A0"/>
<dbReference type="EnsemblMetazoa" id="FBtr0156737">
    <property type="protein sequence ID" value="FBpp0155229"/>
    <property type="gene ID" value="FBgn0128785"/>
</dbReference>
<dbReference type="EnsemblMetazoa" id="XM_001986334.2">
    <property type="protein sequence ID" value="XP_001986370.1"/>
    <property type="gene ID" value="LOC6560572"/>
</dbReference>
<dbReference type="GeneID" id="6560572"/>
<dbReference type="KEGG" id="dgr:6560572"/>
<dbReference type="CTD" id="36743"/>
<dbReference type="eggNOG" id="KOG3261">
    <property type="taxonomic scope" value="Eukaryota"/>
</dbReference>
<dbReference type="HOGENOM" id="CLU_091083_1_0_1"/>
<dbReference type="InParanoid" id="B4J8A0"/>
<dbReference type="OMA" id="GWGTVYS"/>
<dbReference type="OrthoDB" id="191192at2759"/>
<dbReference type="PhylomeDB" id="B4J8A0"/>
<dbReference type="ChiTaRS" id="Zasp52">
    <property type="organism name" value="fly"/>
</dbReference>
<dbReference type="Proteomes" id="UP000001070">
    <property type="component" value="Unassembled WGS sequence"/>
</dbReference>
<dbReference type="GO" id="GO:0005829">
    <property type="term" value="C:cytosol"/>
    <property type="evidence" value="ECO:0007669"/>
    <property type="project" value="TreeGrafter"/>
</dbReference>
<dbReference type="GO" id="GO:0005634">
    <property type="term" value="C:nucleus"/>
    <property type="evidence" value="ECO:0007669"/>
    <property type="project" value="TreeGrafter"/>
</dbReference>
<dbReference type="GO" id="GO:0008418">
    <property type="term" value="F:protein-N-terminal asparagine amidohydrolase activity"/>
    <property type="evidence" value="ECO:0007669"/>
    <property type="project" value="InterPro"/>
</dbReference>
<dbReference type="GO" id="GO:0070773">
    <property type="term" value="F:protein-N-terminal glutamine amidohydrolase activity"/>
    <property type="evidence" value="ECO:0007669"/>
    <property type="project" value="UniProtKB-EC"/>
</dbReference>
<dbReference type="FunFam" id="3.10.620.10:FF:000001">
    <property type="entry name" value="Blast:Protein N-terminal glutamine amidohydrolase"/>
    <property type="match status" value="1"/>
</dbReference>
<dbReference type="Gene3D" id="3.10.620.10">
    <property type="entry name" value="Protein N-terminal glutamine amidohydrolase, alpha beta roll"/>
    <property type="match status" value="1"/>
</dbReference>
<dbReference type="InterPro" id="IPR037132">
    <property type="entry name" value="N_Gln_amidohydro_ab_roll_sf"/>
</dbReference>
<dbReference type="InterPro" id="IPR039733">
    <property type="entry name" value="NTAQ1"/>
</dbReference>
<dbReference type="InterPro" id="IPR023128">
    <property type="entry name" value="Prot_N_Gln_amidohydro_ab_roll"/>
</dbReference>
<dbReference type="PANTHER" id="PTHR13035">
    <property type="entry name" value="PROTEIN N-TERMINAL GLUTAMINE AMIDOHYDROLASE"/>
    <property type="match status" value="1"/>
</dbReference>
<dbReference type="PANTHER" id="PTHR13035:SF0">
    <property type="entry name" value="PROTEIN N-TERMINAL GLUTAMINE AMIDOHYDROLASE"/>
    <property type="match status" value="1"/>
</dbReference>
<dbReference type="Pfam" id="PF09764">
    <property type="entry name" value="Nt_Gln_amidase"/>
    <property type="match status" value="1"/>
</dbReference>
<accession>B4J8A0</accession>